<accession>B7IFN4</accession>
<gene>
    <name evidence="1" type="primary">eno</name>
    <name type="ordered locus">THA_405</name>
</gene>
<organism>
    <name type="scientific">Thermosipho africanus (strain TCF52B)</name>
    <dbReference type="NCBI Taxonomy" id="484019"/>
    <lineage>
        <taxon>Bacteria</taxon>
        <taxon>Thermotogati</taxon>
        <taxon>Thermotogota</taxon>
        <taxon>Thermotogae</taxon>
        <taxon>Thermotogales</taxon>
        <taxon>Fervidobacteriaceae</taxon>
        <taxon>Thermosipho</taxon>
    </lineage>
</organism>
<sequence length="429" mass="47029">MYIEIIDVFAREVLDSRGNPTVEVEVMLEDGSIGRAIVPSGASTGKFEALELRDGDKKRYLGKGVLKAVENVNELIAPKLLGLNAYDQVYIDNVLLELDGTENKSKLGANAILGVSMAVARAAANSLQLPLYKYLGGVNAKVLPVPLMNVINGGAHADNNLDIQEFMIVPAGAPSFREALRYGAETFHALKKILKEAGHVTAVGDEGGFAPNLKNNEEAIQVLIQAIQSAGYEPGKDIFIALDVAASEFYNEETGKYFIDGSEKTVDELIEYYKSLIEKYPIISIEDPFDQEDWEAYQKFNKEVGNKVQIVGDDLYVTNVKRLQKGIELKASNSILIKLNQIGSVTETLNAIELAKTNNMTNVISHRSGETEDTFIADLAVATNAGLIKTGSLSRSERIAKYNQLLRIEEELGDVAQYRGLDAFYSIKR</sequence>
<name>ENO_THEAB</name>
<keyword id="KW-0963">Cytoplasm</keyword>
<keyword id="KW-0324">Glycolysis</keyword>
<keyword id="KW-0456">Lyase</keyword>
<keyword id="KW-0460">Magnesium</keyword>
<keyword id="KW-0479">Metal-binding</keyword>
<keyword id="KW-1185">Reference proteome</keyword>
<keyword id="KW-0964">Secreted</keyword>
<feature type="chain" id="PRO_1000119581" description="Enolase">
    <location>
        <begin position="1"/>
        <end position="429"/>
    </location>
</feature>
<feature type="active site" description="Proton donor" evidence="1">
    <location>
        <position position="206"/>
    </location>
</feature>
<feature type="active site" description="Proton acceptor" evidence="1">
    <location>
        <position position="338"/>
    </location>
</feature>
<feature type="binding site" evidence="1">
    <location>
        <position position="164"/>
    </location>
    <ligand>
        <name>(2R)-2-phosphoglycerate</name>
        <dbReference type="ChEBI" id="CHEBI:58289"/>
    </ligand>
</feature>
<feature type="binding site" evidence="1">
    <location>
        <position position="243"/>
    </location>
    <ligand>
        <name>Mg(2+)</name>
        <dbReference type="ChEBI" id="CHEBI:18420"/>
    </ligand>
</feature>
<feature type="binding site" evidence="1">
    <location>
        <position position="286"/>
    </location>
    <ligand>
        <name>Mg(2+)</name>
        <dbReference type="ChEBI" id="CHEBI:18420"/>
    </ligand>
</feature>
<feature type="binding site" evidence="1">
    <location>
        <position position="313"/>
    </location>
    <ligand>
        <name>Mg(2+)</name>
        <dbReference type="ChEBI" id="CHEBI:18420"/>
    </ligand>
</feature>
<feature type="binding site" evidence="1">
    <location>
        <position position="338"/>
    </location>
    <ligand>
        <name>(2R)-2-phosphoglycerate</name>
        <dbReference type="ChEBI" id="CHEBI:58289"/>
    </ligand>
</feature>
<feature type="binding site" evidence="1">
    <location>
        <position position="367"/>
    </location>
    <ligand>
        <name>(2R)-2-phosphoglycerate</name>
        <dbReference type="ChEBI" id="CHEBI:58289"/>
    </ligand>
</feature>
<feature type="binding site" evidence="1">
    <location>
        <position position="368"/>
    </location>
    <ligand>
        <name>(2R)-2-phosphoglycerate</name>
        <dbReference type="ChEBI" id="CHEBI:58289"/>
    </ligand>
</feature>
<feature type="binding site" evidence="1">
    <location>
        <position position="389"/>
    </location>
    <ligand>
        <name>(2R)-2-phosphoglycerate</name>
        <dbReference type="ChEBI" id="CHEBI:58289"/>
    </ligand>
</feature>
<reference key="1">
    <citation type="journal article" date="2009" name="J. Bacteriol.">
        <title>The genome of Thermosipho africanus TCF52B: lateral genetic connections to the Firmicutes and Archaea.</title>
        <authorList>
            <person name="Nesboe C.L."/>
            <person name="Bapteste E."/>
            <person name="Curtis B."/>
            <person name="Dahle H."/>
            <person name="Lopez P."/>
            <person name="Macleod D."/>
            <person name="Dlutek M."/>
            <person name="Bowman S."/>
            <person name="Zhaxybayeva O."/>
            <person name="Birkeland N.-K."/>
            <person name="Doolittle W.F."/>
        </authorList>
    </citation>
    <scope>NUCLEOTIDE SEQUENCE [LARGE SCALE GENOMIC DNA]</scope>
    <source>
        <strain>TCF52B</strain>
    </source>
</reference>
<protein>
    <recommendedName>
        <fullName evidence="1">Enolase</fullName>
        <ecNumber evidence="1">4.2.1.11</ecNumber>
    </recommendedName>
    <alternativeName>
        <fullName evidence="1">2-phospho-D-glycerate hydro-lyase</fullName>
    </alternativeName>
    <alternativeName>
        <fullName evidence="1">2-phosphoglycerate dehydratase</fullName>
    </alternativeName>
</protein>
<evidence type="ECO:0000255" key="1">
    <source>
        <dbReference type="HAMAP-Rule" id="MF_00318"/>
    </source>
</evidence>
<proteinExistence type="inferred from homology"/>
<dbReference type="EC" id="4.2.1.11" evidence="1"/>
<dbReference type="EMBL" id="CP001185">
    <property type="protein sequence ID" value="ACJ74898.1"/>
    <property type="molecule type" value="Genomic_DNA"/>
</dbReference>
<dbReference type="RefSeq" id="WP_012579553.1">
    <property type="nucleotide sequence ID" value="NC_011653.1"/>
</dbReference>
<dbReference type="SMR" id="B7IFN4"/>
<dbReference type="STRING" id="484019.THA_405"/>
<dbReference type="KEGG" id="taf:THA_405"/>
<dbReference type="eggNOG" id="COG0148">
    <property type="taxonomic scope" value="Bacteria"/>
</dbReference>
<dbReference type="HOGENOM" id="CLU_031223_2_1_0"/>
<dbReference type="OrthoDB" id="9804716at2"/>
<dbReference type="UniPathway" id="UPA00109">
    <property type="reaction ID" value="UER00187"/>
</dbReference>
<dbReference type="Proteomes" id="UP000002453">
    <property type="component" value="Chromosome"/>
</dbReference>
<dbReference type="GO" id="GO:0009986">
    <property type="term" value="C:cell surface"/>
    <property type="evidence" value="ECO:0007669"/>
    <property type="project" value="UniProtKB-SubCell"/>
</dbReference>
<dbReference type="GO" id="GO:0005576">
    <property type="term" value="C:extracellular region"/>
    <property type="evidence" value="ECO:0007669"/>
    <property type="project" value="UniProtKB-SubCell"/>
</dbReference>
<dbReference type="GO" id="GO:0000015">
    <property type="term" value="C:phosphopyruvate hydratase complex"/>
    <property type="evidence" value="ECO:0007669"/>
    <property type="project" value="InterPro"/>
</dbReference>
<dbReference type="GO" id="GO:0000287">
    <property type="term" value="F:magnesium ion binding"/>
    <property type="evidence" value="ECO:0007669"/>
    <property type="project" value="UniProtKB-UniRule"/>
</dbReference>
<dbReference type="GO" id="GO:0004634">
    <property type="term" value="F:phosphopyruvate hydratase activity"/>
    <property type="evidence" value="ECO:0007669"/>
    <property type="project" value="UniProtKB-UniRule"/>
</dbReference>
<dbReference type="GO" id="GO:0006096">
    <property type="term" value="P:glycolytic process"/>
    <property type="evidence" value="ECO:0007669"/>
    <property type="project" value="UniProtKB-UniRule"/>
</dbReference>
<dbReference type="CDD" id="cd03313">
    <property type="entry name" value="enolase"/>
    <property type="match status" value="1"/>
</dbReference>
<dbReference type="FunFam" id="3.20.20.120:FF:000001">
    <property type="entry name" value="Enolase"/>
    <property type="match status" value="1"/>
</dbReference>
<dbReference type="FunFam" id="3.30.390.10:FF:000001">
    <property type="entry name" value="Enolase"/>
    <property type="match status" value="1"/>
</dbReference>
<dbReference type="Gene3D" id="3.20.20.120">
    <property type="entry name" value="Enolase-like C-terminal domain"/>
    <property type="match status" value="1"/>
</dbReference>
<dbReference type="Gene3D" id="3.30.390.10">
    <property type="entry name" value="Enolase-like, N-terminal domain"/>
    <property type="match status" value="1"/>
</dbReference>
<dbReference type="HAMAP" id="MF_00318">
    <property type="entry name" value="Enolase"/>
    <property type="match status" value="1"/>
</dbReference>
<dbReference type="InterPro" id="IPR000941">
    <property type="entry name" value="Enolase"/>
</dbReference>
<dbReference type="InterPro" id="IPR036849">
    <property type="entry name" value="Enolase-like_C_sf"/>
</dbReference>
<dbReference type="InterPro" id="IPR029017">
    <property type="entry name" value="Enolase-like_N"/>
</dbReference>
<dbReference type="InterPro" id="IPR020810">
    <property type="entry name" value="Enolase_C"/>
</dbReference>
<dbReference type="InterPro" id="IPR020809">
    <property type="entry name" value="Enolase_CS"/>
</dbReference>
<dbReference type="InterPro" id="IPR020811">
    <property type="entry name" value="Enolase_N"/>
</dbReference>
<dbReference type="NCBIfam" id="TIGR01060">
    <property type="entry name" value="eno"/>
    <property type="match status" value="1"/>
</dbReference>
<dbReference type="PANTHER" id="PTHR11902">
    <property type="entry name" value="ENOLASE"/>
    <property type="match status" value="1"/>
</dbReference>
<dbReference type="PANTHER" id="PTHR11902:SF1">
    <property type="entry name" value="ENOLASE"/>
    <property type="match status" value="1"/>
</dbReference>
<dbReference type="Pfam" id="PF00113">
    <property type="entry name" value="Enolase_C"/>
    <property type="match status" value="1"/>
</dbReference>
<dbReference type="Pfam" id="PF03952">
    <property type="entry name" value="Enolase_N"/>
    <property type="match status" value="1"/>
</dbReference>
<dbReference type="PIRSF" id="PIRSF001400">
    <property type="entry name" value="Enolase"/>
    <property type="match status" value="1"/>
</dbReference>
<dbReference type="PRINTS" id="PR00148">
    <property type="entry name" value="ENOLASE"/>
</dbReference>
<dbReference type="SFLD" id="SFLDF00002">
    <property type="entry name" value="enolase"/>
    <property type="match status" value="1"/>
</dbReference>
<dbReference type="SFLD" id="SFLDG00178">
    <property type="entry name" value="enolase"/>
    <property type="match status" value="1"/>
</dbReference>
<dbReference type="SMART" id="SM01192">
    <property type="entry name" value="Enolase_C"/>
    <property type="match status" value="1"/>
</dbReference>
<dbReference type="SMART" id="SM01193">
    <property type="entry name" value="Enolase_N"/>
    <property type="match status" value="1"/>
</dbReference>
<dbReference type="SUPFAM" id="SSF51604">
    <property type="entry name" value="Enolase C-terminal domain-like"/>
    <property type="match status" value="1"/>
</dbReference>
<dbReference type="SUPFAM" id="SSF54826">
    <property type="entry name" value="Enolase N-terminal domain-like"/>
    <property type="match status" value="1"/>
</dbReference>
<dbReference type="PROSITE" id="PS00164">
    <property type="entry name" value="ENOLASE"/>
    <property type="match status" value="1"/>
</dbReference>
<comment type="function">
    <text evidence="1">Catalyzes the reversible conversion of 2-phosphoglycerate (2-PG) into phosphoenolpyruvate (PEP). It is essential for the degradation of carbohydrates via glycolysis.</text>
</comment>
<comment type="catalytic activity">
    <reaction evidence="1">
        <text>(2R)-2-phosphoglycerate = phosphoenolpyruvate + H2O</text>
        <dbReference type="Rhea" id="RHEA:10164"/>
        <dbReference type="ChEBI" id="CHEBI:15377"/>
        <dbReference type="ChEBI" id="CHEBI:58289"/>
        <dbReference type="ChEBI" id="CHEBI:58702"/>
        <dbReference type="EC" id="4.2.1.11"/>
    </reaction>
</comment>
<comment type="cofactor">
    <cofactor evidence="1">
        <name>Mg(2+)</name>
        <dbReference type="ChEBI" id="CHEBI:18420"/>
    </cofactor>
    <text evidence="1">Binds a second Mg(2+) ion via substrate during catalysis.</text>
</comment>
<comment type="pathway">
    <text evidence="1">Carbohydrate degradation; glycolysis; pyruvate from D-glyceraldehyde 3-phosphate: step 4/5.</text>
</comment>
<comment type="subcellular location">
    <subcellularLocation>
        <location evidence="1">Cytoplasm</location>
    </subcellularLocation>
    <subcellularLocation>
        <location evidence="1">Secreted</location>
    </subcellularLocation>
    <subcellularLocation>
        <location evidence="1">Cell surface</location>
    </subcellularLocation>
    <text evidence="1">Fractions of enolase are present in both the cytoplasm and on the cell surface.</text>
</comment>
<comment type="similarity">
    <text evidence="1">Belongs to the enolase family.</text>
</comment>